<sequence>MIYIGLPQWSHPKWVRLGITSLEEYARHFNCVEGNTTLYALPKPEVVLRWREQTTDDFRFCFKFPATISHQAALRHCDDLVTEFLTRMSPLAPRIGQYWLQLPATFGPRELPALWHFLDSLPGEFNYGVEVRHPQFFAKGEEEQTLNRGLHQRGVNRVILDSRPVHAARPHSEAIRDAQRKKPKVPVHAVLTATNPLIRFIGSDDMTQNRELFQVWLQKLAQWHQTTTPYLFLHTPDIAQAPELVHTLWEDLRKTLPEIGAVPAIPQQSSLF</sequence>
<proteinExistence type="inferred from homology"/>
<organism>
    <name type="scientific">Escherichia coli (strain K12)</name>
    <dbReference type="NCBI Taxonomy" id="83333"/>
    <lineage>
        <taxon>Bacteria</taxon>
        <taxon>Pseudomonadati</taxon>
        <taxon>Pseudomonadota</taxon>
        <taxon>Gammaproteobacteria</taxon>
        <taxon>Enterobacterales</taxon>
        <taxon>Enterobacteriaceae</taxon>
        <taxon>Escherichia</taxon>
    </lineage>
</organism>
<protein>
    <recommendedName>
        <fullName>UPF0759 protein YecE</fullName>
    </recommendedName>
</protein>
<gene>
    <name type="primary">yecE</name>
    <name type="ordered locus">b1868</name>
    <name type="ordered locus">JW1857</name>
</gene>
<reference key="1">
    <citation type="journal article" date="1996" name="DNA Res.">
        <title>A 460-kb DNA sequence of the Escherichia coli K-12 genome corresponding to the 40.1-50.0 min region on the linkage map.</title>
        <authorList>
            <person name="Itoh T."/>
            <person name="Aiba H."/>
            <person name="Baba T."/>
            <person name="Fujita K."/>
            <person name="Hayashi K."/>
            <person name="Inada T."/>
            <person name="Isono K."/>
            <person name="Kasai H."/>
            <person name="Kimura S."/>
            <person name="Kitakawa M."/>
            <person name="Kitagawa M."/>
            <person name="Makino K."/>
            <person name="Miki T."/>
            <person name="Mizobuchi K."/>
            <person name="Mori H."/>
            <person name="Mori T."/>
            <person name="Motomura K."/>
            <person name="Nakade S."/>
            <person name="Nakamura Y."/>
            <person name="Nashimoto H."/>
            <person name="Nishio Y."/>
            <person name="Oshima T."/>
            <person name="Saito N."/>
            <person name="Sampei G."/>
            <person name="Seki Y."/>
            <person name="Sivasundaram S."/>
            <person name="Tagami H."/>
            <person name="Takeda J."/>
            <person name="Takemoto K."/>
            <person name="Wada C."/>
            <person name="Yamamoto Y."/>
            <person name="Horiuchi T."/>
        </authorList>
    </citation>
    <scope>NUCLEOTIDE SEQUENCE [LARGE SCALE GENOMIC DNA]</scope>
    <source>
        <strain>K12 / W3110 / ATCC 27325 / DSM 5911</strain>
    </source>
</reference>
<reference key="2">
    <citation type="journal article" date="1997" name="Science">
        <title>The complete genome sequence of Escherichia coli K-12.</title>
        <authorList>
            <person name="Blattner F.R."/>
            <person name="Plunkett G. III"/>
            <person name="Bloch C.A."/>
            <person name="Perna N.T."/>
            <person name="Burland V."/>
            <person name="Riley M."/>
            <person name="Collado-Vides J."/>
            <person name="Glasner J.D."/>
            <person name="Rode C.K."/>
            <person name="Mayhew G.F."/>
            <person name="Gregor J."/>
            <person name="Davis N.W."/>
            <person name="Kirkpatrick H.A."/>
            <person name="Goeden M.A."/>
            <person name="Rose D.J."/>
            <person name="Mau B."/>
            <person name="Shao Y."/>
        </authorList>
    </citation>
    <scope>NUCLEOTIDE SEQUENCE [LARGE SCALE GENOMIC DNA]</scope>
    <source>
        <strain>K12 / MG1655 / ATCC 47076</strain>
    </source>
</reference>
<reference key="3">
    <citation type="journal article" date="2006" name="Mol. Syst. Biol.">
        <title>Highly accurate genome sequences of Escherichia coli K-12 strains MG1655 and W3110.</title>
        <authorList>
            <person name="Hayashi K."/>
            <person name="Morooka N."/>
            <person name="Yamamoto Y."/>
            <person name="Fujita K."/>
            <person name="Isono K."/>
            <person name="Choi S."/>
            <person name="Ohtsubo E."/>
            <person name="Baba T."/>
            <person name="Wanner B.L."/>
            <person name="Mori H."/>
            <person name="Horiuchi T."/>
        </authorList>
    </citation>
    <scope>NUCLEOTIDE SEQUENCE [LARGE SCALE GENOMIC DNA]</scope>
    <source>
        <strain>K12 / W3110 / ATCC 27325 / DSM 5911</strain>
    </source>
</reference>
<reference key="4">
    <citation type="journal article" date="1990" name="Nucleic Acids Res.">
        <title>Aspartyl-tRNA synthetase from Escherichia coli: cloning and characterisation of the gene, homologies of its translated amino acid sequence with asparaginyl- and lysyl-tRNA synthetases.</title>
        <authorList>
            <person name="Eriani G."/>
            <person name="Dirheimer G."/>
            <person name="Gangloff J."/>
        </authorList>
    </citation>
    <scope>NUCLEOTIDE SEQUENCE [GENOMIC DNA] OF 1-167</scope>
    <source>
        <strain>K12</strain>
    </source>
</reference>
<reference key="5">
    <citation type="journal article" date="1994" name="Nucleic Acids Res.">
        <title>Intrinsic and extrinsic approaches for detecting genes in a bacterial genome.</title>
        <authorList>
            <person name="Borodovsky M."/>
            <person name="Rudd K.E."/>
            <person name="Koonin E.V."/>
        </authorList>
    </citation>
    <scope>IDENTIFICATION</scope>
</reference>
<accession>P37348</accession>
<accession>P76288</accession>
<evidence type="ECO:0000305" key="1"/>
<keyword id="KW-1185">Reference proteome</keyword>
<comment type="similarity">
    <text evidence="1">Belongs to the UPF0759 family.</text>
</comment>
<name>YECE_ECOLI</name>
<dbReference type="EMBL" id="U00096">
    <property type="protein sequence ID" value="AAC74938.1"/>
    <property type="molecule type" value="Genomic_DNA"/>
</dbReference>
<dbReference type="EMBL" id="AP009048">
    <property type="protein sequence ID" value="BAA15679.2"/>
    <property type="molecule type" value="Genomic_DNA"/>
</dbReference>
<dbReference type="EMBL" id="X53863">
    <property type="status" value="NOT_ANNOTATED_CDS"/>
    <property type="molecule type" value="Genomic_DNA"/>
</dbReference>
<dbReference type="PIR" id="D64949">
    <property type="entry name" value="D64949"/>
</dbReference>
<dbReference type="RefSeq" id="NP_416382.1">
    <property type="nucleotide sequence ID" value="NC_000913.3"/>
</dbReference>
<dbReference type="RefSeq" id="WP_000639274.1">
    <property type="nucleotide sequence ID" value="NZ_SSZK01000001.1"/>
</dbReference>
<dbReference type="SMR" id="P37348"/>
<dbReference type="BioGRID" id="4259331">
    <property type="interactions" value="24"/>
</dbReference>
<dbReference type="BioGRID" id="850739">
    <property type="interactions" value="3"/>
</dbReference>
<dbReference type="DIP" id="DIP-11824N"/>
<dbReference type="FunCoup" id="P37348">
    <property type="interactions" value="69"/>
</dbReference>
<dbReference type="IntAct" id="P37348">
    <property type="interactions" value="3"/>
</dbReference>
<dbReference type="STRING" id="511145.b1868"/>
<dbReference type="jPOST" id="P37348"/>
<dbReference type="PaxDb" id="511145-b1868"/>
<dbReference type="EnsemblBacteria" id="AAC74938">
    <property type="protein sequence ID" value="AAC74938"/>
    <property type="gene ID" value="b1868"/>
</dbReference>
<dbReference type="GeneID" id="946382"/>
<dbReference type="KEGG" id="ecj:JW1857"/>
<dbReference type="KEGG" id="eco:b1868"/>
<dbReference type="KEGG" id="ecoc:C3026_10635"/>
<dbReference type="PATRIC" id="fig|511145.12.peg.1947"/>
<dbReference type="EchoBASE" id="EB2281"/>
<dbReference type="eggNOG" id="COG1801">
    <property type="taxonomic scope" value="Bacteria"/>
</dbReference>
<dbReference type="HOGENOM" id="CLU_046519_2_1_6"/>
<dbReference type="InParanoid" id="P37348"/>
<dbReference type="OMA" id="HDDFRFC"/>
<dbReference type="OrthoDB" id="9780310at2"/>
<dbReference type="PhylomeDB" id="P37348"/>
<dbReference type="BioCyc" id="EcoCyc:EG12379-MONOMER"/>
<dbReference type="PRO" id="PR:P37348"/>
<dbReference type="Proteomes" id="UP000000625">
    <property type="component" value="Chromosome"/>
</dbReference>
<dbReference type="Gene3D" id="3.20.20.410">
    <property type="entry name" value="Protein of unknown function UPF0759"/>
    <property type="match status" value="1"/>
</dbReference>
<dbReference type="InterPro" id="IPR002763">
    <property type="entry name" value="DUF72"/>
</dbReference>
<dbReference type="InterPro" id="IPR036520">
    <property type="entry name" value="UPF0759_sf"/>
</dbReference>
<dbReference type="NCBIfam" id="NF007637">
    <property type="entry name" value="PRK10302.1"/>
    <property type="match status" value="1"/>
</dbReference>
<dbReference type="PANTHER" id="PTHR30348">
    <property type="entry name" value="UNCHARACTERIZED PROTEIN YECE"/>
    <property type="match status" value="1"/>
</dbReference>
<dbReference type="PANTHER" id="PTHR30348:SF9">
    <property type="entry name" value="UPF0759 PROTEIN YECE"/>
    <property type="match status" value="1"/>
</dbReference>
<dbReference type="Pfam" id="PF01904">
    <property type="entry name" value="DUF72"/>
    <property type="match status" value="1"/>
</dbReference>
<dbReference type="SUPFAM" id="SSF117396">
    <property type="entry name" value="TM1631-like"/>
    <property type="match status" value="1"/>
</dbReference>
<feature type="chain" id="PRO_0000169071" description="UPF0759 protein YecE">
    <location>
        <begin position="1"/>
        <end position="272"/>
    </location>
</feature>
<feature type="sequence conflict" description="In Ref. 4; X53863." evidence="1" ref="4">
    <original>EQ</original>
    <variation>DE</variation>
    <location>
        <begin position="52"/>
        <end position="53"/>
    </location>
</feature>
<feature type="sequence conflict" description="In Ref. 4." evidence="1" ref="4">
    <original>RVILDSRPVHA</original>
    <variation>AGDFRQPPDKL</variation>
    <location>
        <begin position="157"/>
        <end position="167"/>
    </location>
</feature>